<protein>
    <recommendedName>
        <fullName evidence="1">5-oxoprolinase subunit A</fullName>
        <shortName evidence="1">5-OPase subunit A</shortName>
        <ecNumber evidence="1">3.5.2.9</ecNumber>
    </recommendedName>
    <alternativeName>
        <fullName evidence="1">5-oxoprolinase (ATP-hydrolyzing) subunit A</fullName>
    </alternativeName>
</protein>
<feature type="chain" id="PRO_1000200447" description="5-oxoprolinase subunit A">
    <location>
        <begin position="1"/>
        <end position="253"/>
    </location>
</feature>
<organism>
    <name type="scientific">Bacillus anthracis (strain A0248)</name>
    <dbReference type="NCBI Taxonomy" id="592021"/>
    <lineage>
        <taxon>Bacteria</taxon>
        <taxon>Bacillati</taxon>
        <taxon>Bacillota</taxon>
        <taxon>Bacilli</taxon>
        <taxon>Bacillales</taxon>
        <taxon>Bacillaceae</taxon>
        <taxon>Bacillus</taxon>
        <taxon>Bacillus cereus group</taxon>
    </lineage>
</organism>
<keyword id="KW-0067">ATP-binding</keyword>
<keyword id="KW-0378">Hydrolase</keyword>
<keyword id="KW-0547">Nucleotide-binding</keyword>
<sequence>MTTIDLNCNLGESFGAYKMGNDDEILPFVSSINVACGFHAGDPSVMRQTVEKAMQHNVAIGAHPGFPDLIGFGRRNMNVSANEVYDYVLYQIGALDAFVKAAGGKMQHVKPHGALYNMAATNPEIADAIAKAIYHMNSSLSLYGLANSEAFIQAAEKYNITLVQEAFADRTYKEDGTLTSRTEENALIKNEDEAIKQVLQMVKEGYVNSVNGEKVAVQAQTICLHGDGEKAVQFARKIYRTFEHNKISICAPK</sequence>
<evidence type="ECO:0000255" key="1">
    <source>
        <dbReference type="HAMAP-Rule" id="MF_00691"/>
    </source>
</evidence>
<reference key="1">
    <citation type="submission" date="2009-04" db="EMBL/GenBank/DDBJ databases">
        <title>Genome sequence of Bacillus anthracis A0248.</title>
        <authorList>
            <person name="Dodson R.J."/>
            <person name="Munk A.C."/>
            <person name="Bruce D."/>
            <person name="Detter C."/>
            <person name="Tapia R."/>
            <person name="Sutton G."/>
            <person name="Sims D."/>
            <person name="Brettin T."/>
        </authorList>
    </citation>
    <scope>NUCLEOTIDE SEQUENCE [LARGE SCALE GENOMIC DNA]</scope>
    <source>
        <strain>A0248</strain>
    </source>
</reference>
<name>PXPA_BACAA</name>
<gene>
    <name evidence="1" type="primary">pxpA</name>
    <name type="ordered locus">BAA_3146</name>
</gene>
<accession>C3P0S0</accession>
<dbReference type="EC" id="3.5.2.9" evidence="1"/>
<dbReference type="EMBL" id="CP001598">
    <property type="protein sequence ID" value="ACQ47647.1"/>
    <property type="molecule type" value="Genomic_DNA"/>
</dbReference>
<dbReference type="RefSeq" id="WP_000207358.1">
    <property type="nucleotide sequence ID" value="NC_012659.1"/>
</dbReference>
<dbReference type="SMR" id="C3P0S0"/>
<dbReference type="GeneID" id="45022898"/>
<dbReference type="KEGG" id="bai:BAA_3146"/>
<dbReference type="HOGENOM" id="CLU_069535_0_0_9"/>
<dbReference type="GO" id="GO:0017168">
    <property type="term" value="F:5-oxoprolinase (ATP-hydrolyzing) activity"/>
    <property type="evidence" value="ECO:0007669"/>
    <property type="project" value="UniProtKB-UniRule"/>
</dbReference>
<dbReference type="GO" id="GO:0005524">
    <property type="term" value="F:ATP binding"/>
    <property type="evidence" value="ECO:0007669"/>
    <property type="project" value="UniProtKB-UniRule"/>
</dbReference>
<dbReference type="GO" id="GO:0005975">
    <property type="term" value="P:carbohydrate metabolic process"/>
    <property type="evidence" value="ECO:0007669"/>
    <property type="project" value="InterPro"/>
</dbReference>
<dbReference type="CDD" id="cd10787">
    <property type="entry name" value="LamB_YcsF_like"/>
    <property type="match status" value="1"/>
</dbReference>
<dbReference type="Gene3D" id="3.20.20.370">
    <property type="entry name" value="Glycoside hydrolase/deacetylase"/>
    <property type="match status" value="1"/>
</dbReference>
<dbReference type="HAMAP" id="MF_00691">
    <property type="entry name" value="PxpA"/>
    <property type="match status" value="1"/>
</dbReference>
<dbReference type="InterPro" id="IPR011330">
    <property type="entry name" value="Glyco_hydro/deAcase_b/a-brl"/>
</dbReference>
<dbReference type="InterPro" id="IPR005501">
    <property type="entry name" value="LamB/YcsF/PxpA-like"/>
</dbReference>
<dbReference type="NCBIfam" id="NF003813">
    <property type="entry name" value="PRK05406.1-2"/>
    <property type="match status" value="1"/>
</dbReference>
<dbReference type="NCBIfam" id="NF003814">
    <property type="entry name" value="PRK05406.1-3"/>
    <property type="match status" value="1"/>
</dbReference>
<dbReference type="NCBIfam" id="NF003816">
    <property type="entry name" value="PRK05406.1-5"/>
    <property type="match status" value="1"/>
</dbReference>
<dbReference type="PANTHER" id="PTHR30292:SF0">
    <property type="entry name" value="5-OXOPROLINASE SUBUNIT A"/>
    <property type="match status" value="1"/>
</dbReference>
<dbReference type="PANTHER" id="PTHR30292">
    <property type="entry name" value="UNCHARACTERIZED PROTEIN YBGL-RELATED"/>
    <property type="match status" value="1"/>
</dbReference>
<dbReference type="Pfam" id="PF03746">
    <property type="entry name" value="LamB_YcsF"/>
    <property type="match status" value="1"/>
</dbReference>
<dbReference type="SUPFAM" id="SSF88713">
    <property type="entry name" value="Glycoside hydrolase/deacetylase"/>
    <property type="match status" value="1"/>
</dbReference>
<proteinExistence type="inferred from homology"/>
<comment type="function">
    <text evidence="1">Catalyzes the cleavage of 5-oxoproline to form L-glutamate coupled to the hydrolysis of ATP to ADP and inorganic phosphate.</text>
</comment>
<comment type="catalytic activity">
    <reaction evidence="1">
        <text>5-oxo-L-proline + ATP + 2 H2O = L-glutamate + ADP + phosphate + H(+)</text>
        <dbReference type="Rhea" id="RHEA:10348"/>
        <dbReference type="ChEBI" id="CHEBI:15377"/>
        <dbReference type="ChEBI" id="CHEBI:15378"/>
        <dbReference type="ChEBI" id="CHEBI:29985"/>
        <dbReference type="ChEBI" id="CHEBI:30616"/>
        <dbReference type="ChEBI" id="CHEBI:43474"/>
        <dbReference type="ChEBI" id="CHEBI:58402"/>
        <dbReference type="ChEBI" id="CHEBI:456216"/>
        <dbReference type="EC" id="3.5.2.9"/>
    </reaction>
</comment>
<comment type="subunit">
    <text evidence="1">Forms a complex composed of PxpA, PxpB and PxpC.</text>
</comment>
<comment type="similarity">
    <text evidence="1">Belongs to the LamB/PxpA family.</text>
</comment>